<accession>P43968</accession>
<organism>
    <name type="scientific">Haemophilus influenzae (strain ATCC 51907 / DSM 11121 / KW20 / Rd)</name>
    <dbReference type="NCBI Taxonomy" id="71421"/>
    <lineage>
        <taxon>Bacteria</taxon>
        <taxon>Pseudomonadati</taxon>
        <taxon>Pseudomonadota</taxon>
        <taxon>Gammaproteobacteria</taxon>
        <taxon>Pasteurellales</taxon>
        <taxon>Pasteurellaceae</taxon>
        <taxon>Haemophilus</taxon>
    </lineage>
</organism>
<keyword id="KW-1185">Reference proteome</keyword>
<reference key="1">
    <citation type="journal article" date="1995" name="Science">
        <title>Whole-genome random sequencing and assembly of Haemophilus influenzae Rd.</title>
        <authorList>
            <person name="Fleischmann R.D."/>
            <person name="Adams M.D."/>
            <person name="White O."/>
            <person name="Clayton R.A."/>
            <person name="Kirkness E.F."/>
            <person name="Kerlavage A.R."/>
            <person name="Bult C.J."/>
            <person name="Tomb J.-F."/>
            <person name="Dougherty B.A."/>
            <person name="Merrick J.M."/>
            <person name="McKenney K."/>
            <person name="Sutton G.G."/>
            <person name="FitzHugh W."/>
            <person name="Fields C.A."/>
            <person name="Gocayne J.D."/>
            <person name="Scott J.D."/>
            <person name="Shirley R."/>
            <person name="Liu L.-I."/>
            <person name="Glodek A."/>
            <person name="Kelley J.M."/>
            <person name="Weidman J.F."/>
            <person name="Phillips C.A."/>
            <person name="Spriggs T."/>
            <person name="Hedblom E."/>
            <person name="Cotton M.D."/>
            <person name="Utterback T.R."/>
            <person name="Hanna M.C."/>
            <person name="Nguyen D.T."/>
            <person name="Saudek D.M."/>
            <person name="Brandon R.C."/>
            <person name="Fine L.D."/>
            <person name="Fritchman J.L."/>
            <person name="Fuhrmann J.L."/>
            <person name="Geoghagen N.S.M."/>
            <person name="Gnehm C.L."/>
            <person name="McDonald L.A."/>
            <person name="Small K.V."/>
            <person name="Fraser C.M."/>
            <person name="Smith H.O."/>
            <person name="Venter J.C."/>
        </authorList>
    </citation>
    <scope>NUCLEOTIDE SEQUENCE [LARGE SCALE GENOMIC DNA]</scope>
    <source>
        <strain>ATCC 51907 / DSM 11121 / KW20 / Rd</strain>
    </source>
</reference>
<protein>
    <recommendedName>
        <fullName>Uncharacterized protein HI_0234</fullName>
    </recommendedName>
</protein>
<sequence>MRKVEDQIKIQRSFTELNELFKFLGDYFDPVSIGLVGVKIGNLGIKLE</sequence>
<name>Y234_HAEIN</name>
<gene>
    <name type="ordered locus">HI_0234</name>
</gene>
<proteinExistence type="predicted"/>
<dbReference type="EMBL" id="L42023">
    <property type="protein sequence ID" value="AAC21904.1"/>
    <property type="molecule type" value="Genomic_DNA"/>
</dbReference>
<dbReference type="PIR" id="D64004">
    <property type="entry name" value="D64004"/>
</dbReference>
<dbReference type="SMR" id="P43968"/>
<dbReference type="EnsemblBacteria" id="AAC21904">
    <property type="protein sequence ID" value="AAC21904"/>
    <property type="gene ID" value="HI_0234"/>
</dbReference>
<dbReference type="KEGG" id="hin:HI_0234"/>
<dbReference type="HOGENOM" id="CLU_3153423_0_0_6"/>
<dbReference type="Proteomes" id="UP000000579">
    <property type="component" value="Chromosome"/>
</dbReference>
<dbReference type="InterPro" id="IPR035318">
    <property type="entry name" value="DUF5377"/>
</dbReference>
<dbReference type="Pfam" id="PF17347">
    <property type="entry name" value="DUF5377"/>
    <property type="match status" value="1"/>
</dbReference>
<feature type="chain" id="PRO_0000077901" description="Uncharacterized protein HI_0234">
    <location>
        <begin position="1"/>
        <end position="48"/>
    </location>
</feature>